<evidence type="ECO:0000255" key="1">
    <source>
        <dbReference type="HAMAP-Rule" id="MF_01629"/>
    </source>
</evidence>
<accession>Q11U72</accession>
<organism>
    <name type="scientific">Cytophaga hutchinsonii (strain ATCC 33406 / DSM 1761 / CIP 103989 / NBRC 15051 / NCIMB 9469 / D465)</name>
    <dbReference type="NCBI Taxonomy" id="269798"/>
    <lineage>
        <taxon>Bacteria</taxon>
        <taxon>Pseudomonadati</taxon>
        <taxon>Bacteroidota</taxon>
        <taxon>Cytophagia</taxon>
        <taxon>Cytophagales</taxon>
        <taxon>Cytophagaceae</taxon>
        <taxon>Cytophaga</taxon>
    </lineage>
</organism>
<comment type="function">
    <text evidence="1">Catalyzes the oxidation of either pyridoxine 5'-phosphate (PNP) or pyridoxamine 5'-phosphate (PMP) into pyridoxal 5'-phosphate (PLP).</text>
</comment>
<comment type="catalytic activity">
    <reaction evidence="1">
        <text>pyridoxamine 5'-phosphate + O2 + H2O = pyridoxal 5'-phosphate + H2O2 + NH4(+)</text>
        <dbReference type="Rhea" id="RHEA:15817"/>
        <dbReference type="ChEBI" id="CHEBI:15377"/>
        <dbReference type="ChEBI" id="CHEBI:15379"/>
        <dbReference type="ChEBI" id="CHEBI:16240"/>
        <dbReference type="ChEBI" id="CHEBI:28938"/>
        <dbReference type="ChEBI" id="CHEBI:58451"/>
        <dbReference type="ChEBI" id="CHEBI:597326"/>
        <dbReference type="EC" id="1.4.3.5"/>
    </reaction>
</comment>
<comment type="catalytic activity">
    <reaction evidence="1">
        <text>pyridoxine 5'-phosphate + O2 = pyridoxal 5'-phosphate + H2O2</text>
        <dbReference type="Rhea" id="RHEA:15149"/>
        <dbReference type="ChEBI" id="CHEBI:15379"/>
        <dbReference type="ChEBI" id="CHEBI:16240"/>
        <dbReference type="ChEBI" id="CHEBI:58589"/>
        <dbReference type="ChEBI" id="CHEBI:597326"/>
        <dbReference type="EC" id="1.4.3.5"/>
    </reaction>
</comment>
<comment type="cofactor">
    <cofactor evidence="1">
        <name>FMN</name>
        <dbReference type="ChEBI" id="CHEBI:58210"/>
    </cofactor>
    <text evidence="1">Binds 1 FMN per subunit.</text>
</comment>
<comment type="pathway">
    <text evidence="1">Cofactor metabolism; pyridoxal 5'-phosphate salvage; pyridoxal 5'-phosphate from pyridoxamine 5'-phosphate: step 1/1.</text>
</comment>
<comment type="pathway">
    <text evidence="1">Cofactor metabolism; pyridoxal 5'-phosphate salvage; pyridoxal 5'-phosphate from pyridoxine 5'-phosphate: step 1/1.</text>
</comment>
<comment type="subunit">
    <text evidence="1">Homodimer.</text>
</comment>
<comment type="similarity">
    <text evidence="1">Belongs to the pyridoxamine 5'-phosphate oxidase family.</text>
</comment>
<reference key="1">
    <citation type="journal article" date="2007" name="Appl. Environ. Microbiol.">
        <title>Genome sequence of the cellulolytic gliding bacterium Cytophaga hutchinsonii.</title>
        <authorList>
            <person name="Xie G."/>
            <person name="Bruce D.C."/>
            <person name="Challacombe J.F."/>
            <person name="Chertkov O."/>
            <person name="Detter J.C."/>
            <person name="Gilna P."/>
            <person name="Han C.S."/>
            <person name="Lucas S."/>
            <person name="Misra M."/>
            <person name="Myers G.L."/>
            <person name="Richardson P."/>
            <person name="Tapia R."/>
            <person name="Thayer N."/>
            <person name="Thompson L.S."/>
            <person name="Brettin T.S."/>
            <person name="Henrissat B."/>
            <person name="Wilson D.B."/>
            <person name="McBride M.J."/>
        </authorList>
    </citation>
    <scope>NUCLEOTIDE SEQUENCE [LARGE SCALE GENOMIC DNA]</scope>
    <source>
        <strain>ATCC 33406 / DSM 1761 / JCM 20678 / CIP 103989 / IAM 12607 / NBRC 15051 / NCIMB 9469 / D465</strain>
    </source>
</reference>
<sequence>MKTNLADIRKEYSSRSLDTKDILPSPVEQFRLWLNQALEAGALEATAMNLATVNEAGKPASRIVLLKGIEHGSFVFYTNYKSHKGSDITHNSFGALNFFWPELERQVRIEGKITKVSPEDSDTYFNSRPYQSKIGAWVSDQSKEVASREELESKITYYENKYPEGSVVPRPAHWGGYTLKPAYFEFWQGRPSRLHDRIVYDLEGDIRWNVFRICP</sequence>
<name>PDXH_CYTH3</name>
<gene>
    <name evidence="1" type="primary">pdxH</name>
    <name type="ordered locus">CHU_1775</name>
</gene>
<protein>
    <recommendedName>
        <fullName evidence="1">Pyridoxine/pyridoxamine 5'-phosphate oxidase</fullName>
        <ecNumber evidence="1">1.4.3.5</ecNumber>
    </recommendedName>
    <alternativeName>
        <fullName evidence="1">PNP/PMP oxidase</fullName>
        <shortName evidence="1">PNPOx</shortName>
    </alternativeName>
    <alternativeName>
        <fullName evidence="1">Pyridoxal 5'-phosphate synthase</fullName>
    </alternativeName>
</protein>
<proteinExistence type="inferred from homology"/>
<feature type="chain" id="PRO_0000255863" description="Pyridoxine/pyridoxamine 5'-phosphate oxidase">
    <location>
        <begin position="1"/>
        <end position="215"/>
    </location>
</feature>
<feature type="binding site" evidence="1">
    <location>
        <begin position="9"/>
        <end position="12"/>
    </location>
    <ligand>
        <name>substrate</name>
    </ligand>
</feature>
<feature type="binding site" evidence="1">
    <location>
        <begin position="62"/>
        <end position="67"/>
    </location>
    <ligand>
        <name>FMN</name>
        <dbReference type="ChEBI" id="CHEBI:58210"/>
    </ligand>
</feature>
<feature type="binding site" evidence="1">
    <location>
        <position position="67"/>
    </location>
    <ligand>
        <name>substrate</name>
    </ligand>
</feature>
<feature type="binding site" evidence="1">
    <location>
        <begin position="77"/>
        <end position="78"/>
    </location>
    <ligand>
        <name>FMN</name>
        <dbReference type="ChEBI" id="CHEBI:58210"/>
    </ligand>
</feature>
<feature type="binding site" evidence="1">
    <location>
        <position position="84"/>
    </location>
    <ligand>
        <name>FMN</name>
        <dbReference type="ChEBI" id="CHEBI:58210"/>
    </ligand>
</feature>
<feature type="binding site" evidence="1">
    <location>
        <position position="106"/>
    </location>
    <ligand>
        <name>FMN</name>
        <dbReference type="ChEBI" id="CHEBI:58210"/>
    </ligand>
</feature>
<feature type="binding site" evidence="1">
    <location>
        <position position="124"/>
    </location>
    <ligand>
        <name>substrate</name>
    </ligand>
</feature>
<feature type="binding site" evidence="1">
    <location>
        <position position="128"/>
    </location>
    <ligand>
        <name>substrate</name>
    </ligand>
</feature>
<feature type="binding site" evidence="1">
    <location>
        <position position="132"/>
    </location>
    <ligand>
        <name>substrate</name>
    </ligand>
</feature>
<feature type="binding site" evidence="1">
    <location>
        <begin position="141"/>
        <end position="142"/>
    </location>
    <ligand>
        <name>FMN</name>
        <dbReference type="ChEBI" id="CHEBI:58210"/>
    </ligand>
</feature>
<feature type="binding site" evidence="1">
    <location>
        <position position="187"/>
    </location>
    <ligand>
        <name>FMN</name>
        <dbReference type="ChEBI" id="CHEBI:58210"/>
    </ligand>
</feature>
<feature type="binding site" evidence="1">
    <location>
        <begin position="193"/>
        <end position="195"/>
    </location>
    <ligand>
        <name>substrate</name>
    </ligand>
</feature>
<feature type="binding site" evidence="1">
    <location>
        <position position="197"/>
    </location>
    <ligand>
        <name>FMN</name>
        <dbReference type="ChEBI" id="CHEBI:58210"/>
    </ligand>
</feature>
<dbReference type="EC" id="1.4.3.5" evidence="1"/>
<dbReference type="EMBL" id="CP000383">
    <property type="protein sequence ID" value="ABG59042.1"/>
    <property type="molecule type" value="Genomic_DNA"/>
</dbReference>
<dbReference type="RefSeq" id="WP_011585159.1">
    <property type="nucleotide sequence ID" value="NC_008255.1"/>
</dbReference>
<dbReference type="SMR" id="Q11U72"/>
<dbReference type="STRING" id="269798.CHU_1775"/>
<dbReference type="KEGG" id="chu:CHU_1775"/>
<dbReference type="eggNOG" id="COG0259">
    <property type="taxonomic scope" value="Bacteria"/>
</dbReference>
<dbReference type="HOGENOM" id="CLU_032263_2_2_10"/>
<dbReference type="OrthoDB" id="9780392at2"/>
<dbReference type="UniPathway" id="UPA01068">
    <property type="reaction ID" value="UER00304"/>
</dbReference>
<dbReference type="UniPathway" id="UPA01068">
    <property type="reaction ID" value="UER00305"/>
</dbReference>
<dbReference type="Proteomes" id="UP000001822">
    <property type="component" value="Chromosome"/>
</dbReference>
<dbReference type="GO" id="GO:0010181">
    <property type="term" value="F:FMN binding"/>
    <property type="evidence" value="ECO:0007669"/>
    <property type="project" value="UniProtKB-UniRule"/>
</dbReference>
<dbReference type="GO" id="GO:0004733">
    <property type="term" value="F:pyridoxamine phosphate oxidase activity"/>
    <property type="evidence" value="ECO:0007669"/>
    <property type="project" value="UniProtKB-UniRule"/>
</dbReference>
<dbReference type="GO" id="GO:0008615">
    <property type="term" value="P:pyridoxine biosynthetic process"/>
    <property type="evidence" value="ECO:0007669"/>
    <property type="project" value="UniProtKB-KW"/>
</dbReference>
<dbReference type="Gene3D" id="2.30.110.10">
    <property type="entry name" value="Electron Transport, Fmn-binding Protein, Chain A"/>
    <property type="match status" value="1"/>
</dbReference>
<dbReference type="HAMAP" id="MF_01629">
    <property type="entry name" value="PdxH"/>
    <property type="match status" value="1"/>
</dbReference>
<dbReference type="InterPro" id="IPR000659">
    <property type="entry name" value="Pyridox_Oxase"/>
</dbReference>
<dbReference type="InterPro" id="IPR019740">
    <property type="entry name" value="Pyridox_Oxase_CS"/>
</dbReference>
<dbReference type="InterPro" id="IPR011576">
    <property type="entry name" value="Pyridox_Oxase_N"/>
</dbReference>
<dbReference type="InterPro" id="IPR019576">
    <property type="entry name" value="Pyridoxamine_oxidase_dimer_C"/>
</dbReference>
<dbReference type="InterPro" id="IPR012349">
    <property type="entry name" value="Split_barrel_FMN-bd"/>
</dbReference>
<dbReference type="NCBIfam" id="TIGR00558">
    <property type="entry name" value="pdxH"/>
    <property type="match status" value="1"/>
</dbReference>
<dbReference type="NCBIfam" id="NF004231">
    <property type="entry name" value="PRK05679.1"/>
    <property type="match status" value="1"/>
</dbReference>
<dbReference type="PANTHER" id="PTHR10851:SF0">
    <property type="entry name" value="PYRIDOXINE-5'-PHOSPHATE OXIDASE"/>
    <property type="match status" value="1"/>
</dbReference>
<dbReference type="PANTHER" id="PTHR10851">
    <property type="entry name" value="PYRIDOXINE-5-PHOSPHATE OXIDASE"/>
    <property type="match status" value="1"/>
</dbReference>
<dbReference type="Pfam" id="PF10590">
    <property type="entry name" value="PNP_phzG_C"/>
    <property type="match status" value="1"/>
</dbReference>
<dbReference type="Pfam" id="PF01243">
    <property type="entry name" value="PNPOx_N"/>
    <property type="match status" value="1"/>
</dbReference>
<dbReference type="PIRSF" id="PIRSF000190">
    <property type="entry name" value="Pyd_amn-ph_oxd"/>
    <property type="match status" value="1"/>
</dbReference>
<dbReference type="SUPFAM" id="SSF50475">
    <property type="entry name" value="FMN-binding split barrel"/>
    <property type="match status" value="1"/>
</dbReference>
<dbReference type="PROSITE" id="PS01064">
    <property type="entry name" value="PYRIDOX_OXIDASE"/>
    <property type="match status" value="1"/>
</dbReference>
<keyword id="KW-0285">Flavoprotein</keyword>
<keyword id="KW-0288">FMN</keyword>
<keyword id="KW-0560">Oxidoreductase</keyword>
<keyword id="KW-0664">Pyridoxine biosynthesis</keyword>
<keyword id="KW-1185">Reference proteome</keyword>